<feature type="chain" id="PRO_0000146134" description="Large ribosomal subunit protein eL30">
    <location>
        <begin position="1"/>
        <end position="112"/>
    </location>
</feature>
<protein>
    <recommendedName>
        <fullName evidence="1">Large ribosomal subunit protein eL30</fullName>
    </recommendedName>
    <alternativeName>
        <fullName>60S ribosomal protein L30</fullName>
    </alternativeName>
</protein>
<sequence length="112" mass="12332">MVAAKKTKKTHESINNRLALVMKSGKYTLGYKTVLKSLRSSKGKLIIIANNCPPLRKSEIEYYAMLAKVGVHHYNGNNVDLGTACGKYYRVCCLSIVDPGDSDIIKTLPGDQ</sequence>
<reference key="1">
    <citation type="submission" date="1998-02" db="EMBL/GenBank/DDBJ databases">
        <title>Structure and organization of the yellow lupine ribosomal protein L30 genes.</title>
        <authorList>
            <person name="Nuc P.W."/>
            <person name="Nuc K.T."/>
            <person name="Ziolkowski P.A."/>
            <person name="Slomski R."/>
        </authorList>
    </citation>
    <scope>NUCLEOTIDE SEQUENCE [MRNA]</scope>
    <source>
        <strain>cv. Ventus</strain>
        <tissue>Epicotyl</tissue>
    </source>
</reference>
<organism>
    <name type="scientific">Lupinus luteus</name>
    <name type="common">European yellow lupine</name>
    <dbReference type="NCBI Taxonomy" id="3873"/>
    <lineage>
        <taxon>Eukaryota</taxon>
        <taxon>Viridiplantae</taxon>
        <taxon>Streptophyta</taxon>
        <taxon>Embryophyta</taxon>
        <taxon>Tracheophyta</taxon>
        <taxon>Spermatophyta</taxon>
        <taxon>Magnoliopsida</taxon>
        <taxon>eudicotyledons</taxon>
        <taxon>Gunneridae</taxon>
        <taxon>Pentapetalae</taxon>
        <taxon>rosids</taxon>
        <taxon>fabids</taxon>
        <taxon>Fabales</taxon>
        <taxon>Fabaceae</taxon>
        <taxon>Papilionoideae</taxon>
        <taxon>50 kb inversion clade</taxon>
        <taxon>genistoids sensu lato</taxon>
        <taxon>core genistoids</taxon>
        <taxon>Genisteae</taxon>
        <taxon>Lupinus</taxon>
    </lineage>
</organism>
<proteinExistence type="inferred from homology"/>
<keyword id="KW-0687">Ribonucleoprotein</keyword>
<keyword id="KW-0689">Ribosomal protein</keyword>
<comment type="similarity">
    <text evidence="1">Belongs to the eukaryotic ribosomal protein eL30 family.</text>
</comment>
<name>RL30_LUPLU</name>
<accession>O49884</accession>
<evidence type="ECO:0000305" key="1"/>
<gene>
    <name type="primary">RPL30</name>
</gene>
<dbReference type="EMBL" id="AJ223316">
    <property type="protein sequence ID" value="CAA11256.1"/>
    <property type="molecule type" value="mRNA"/>
</dbReference>
<dbReference type="SMR" id="O49884"/>
<dbReference type="GO" id="GO:0022625">
    <property type="term" value="C:cytosolic large ribosomal subunit"/>
    <property type="evidence" value="ECO:0007669"/>
    <property type="project" value="InterPro"/>
</dbReference>
<dbReference type="GO" id="GO:0003723">
    <property type="term" value="F:RNA binding"/>
    <property type="evidence" value="ECO:0007669"/>
    <property type="project" value="InterPro"/>
</dbReference>
<dbReference type="GO" id="GO:0003735">
    <property type="term" value="F:structural constituent of ribosome"/>
    <property type="evidence" value="ECO:0007669"/>
    <property type="project" value="InterPro"/>
</dbReference>
<dbReference type="FunFam" id="3.30.1330.30:FF:000001">
    <property type="entry name" value="60S ribosomal protein L30"/>
    <property type="match status" value="1"/>
</dbReference>
<dbReference type="Gene3D" id="3.30.1330.30">
    <property type="match status" value="1"/>
</dbReference>
<dbReference type="HAMAP" id="MF_00481">
    <property type="entry name" value="Ribosomal_eL30"/>
    <property type="match status" value="1"/>
</dbReference>
<dbReference type="InterPro" id="IPR000231">
    <property type="entry name" value="Ribosomal_eL30"/>
</dbReference>
<dbReference type="InterPro" id="IPR039109">
    <property type="entry name" value="Ribosomal_eL30-like"/>
</dbReference>
<dbReference type="InterPro" id="IPR029064">
    <property type="entry name" value="Ribosomal_eL30-like_sf"/>
</dbReference>
<dbReference type="InterPro" id="IPR022991">
    <property type="entry name" value="Ribosomal_eL30_CS"/>
</dbReference>
<dbReference type="InterPro" id="IPR004038">
    <property type="entry name" value="Ribosomal_eL8/eL30/eS12/Gad45"/>
</dbReference>
<dbReference type="NCBIfam" id="NF002172">
    <property type="entry name" value="PRK01018.1"/>
    <property type="match status" value="1"/>
</dbReference>
<dbReference type="PANTHER" id="PTHR11449">
    <property type="entry name" value="RIBOSOMAL PROTEIN L30"/>
    <property type="match status" value="1"/>
</dbReference>
<dbReference type="Pfam" id="PF01248">
    <property type="entry name" value="Ribosomal_L7Ae"/>
    <property type="match status" value="1"/>
</dbReference>
<dbReference type="SUPFAM" id="SSF55315">
    <property type="entry name" value="L30e-like"/>
    <property type="match status" value="1"/>
</dbReference>
<dbReference type="PROSITE" id="PS00709">
    <property type="entry name" value="RIBOSOMAL_L30E_1"/>
    <property type="match status" value="1"/>
</dbReference>
<dbReference type="PROSITE" id="PS00993">
    <property type="entry name" value="RIBOSOMAL_L30E_2"/>
    <property type="match status" value="1"/>
</dbReference>